<name>MU121_SCHPO</name>
<dbReference type="EMBL" id="CU329670">
    <property type="protein sequence ID" value="CAA90457.1"/>
    <property type="molecule type" value="Genomic_DNA"/>
</dbReference>
<dbReference type="PIR" id="S59643">
    <property type="entry name" value="S59643"/>
</dbReference>
<dbReference type="RefSeq" id="NP_592934.1">
    <property type="nucleotide sequence ID" value="NM_001018335.2"/>
</dbReference>
<dbReference type="BioGRID" id="279246">
    <property type="interactions" value="8"/>
</dbReference>
<dbReference type="GlyCosmos" id="Q09688">
    <property type="glycosylation" value="1 site, No reported glycans"/>
</dbReference>
<dbReference type="PaxDb" id="4896-SPAC13C5.06c.1"/>
<dbReference type="EnsemblFungi" id="SPAC13C5.06c.1">
    <property type="protein sequence ID" value="SPAC13C5.06c.1:pep"/>
    <property type="gene ID" value="SPAC13C5.06c"/>
</dbReference>
<dbReference type="GeneID" id="2542798"/>
<dbReference type="KEGG" id="spo:2542798"/>
<dbReference type="PomBase" id="SPAC13C5.06c">
    <property type="gene designation" value="mug121"/>
</dbReference>
<dbReference type="VEuPathDB" id="FungiDB:SPAC13C5.06c"/>
<dbReference type="HOGENOM" id="CLU_1518720_0_0_1"/>
<dbReference type="InParanoid" id="Q09688"/>
<dbReference type="PRO" id="PR:Q09688"/>
<dbReference type="Proteomes" id="UP000002485">
    <property type="component" value="Chromosome I"/>
</dbReference>
<dbReference type="GO" id="GO:0005737">
    <property type="term" value="C:cytoplasm"/>
    <property type="evidence" value="ECO:0007005"/>
    <property type="project" value="PomBase"/>
</dbReference>
<dbReference type="GO" id="GO:0005783">
    <property type="term" value="C:endoplasmic reticulum"/>
    <property type="evidence" value="ECO:0007005"/>
    <property type="project" value="PomBase"/>
</dbReference>
<dbReference type="GO" id="GO:0005794">
    <property type="term" value="C:Golgi apparatus"/>
    <property type="evidence" value="ECO:0007005"/>
    <property type="project" value="PomBase"/>
</dbReference>
<feature type="signal peptide" evidence="1">
    <location>
        <begin position="1"/>
        <end position="23"/>
    </location>
</feature>
<feature type="chain" id="PRO_0000014189" description="Meiotically up-regulated gene 121 protein">
    <location>
        <begin position="24"/>
        <end position="177"/>
    </location>
</feature>
<feature type="glycosylation site" description="N-linked (GlcNAc...) asparagine" evidence="1">
    <location>
        <position position="121"/>
    </location>
</feature>
<comment type="function">
    <text evidence="2">Has a role in meiosis.</text>
</comment>
<comment type="subcellular location">
    <subcellularLocation>
        <location evidence="3">Endoplasmic reticulum</location>
    </subcellularLocation>
    <subcellularLocation>
        <location evidence="3">Golgi apparatus</location>
    </subcellularLocation>
</comment>
<proteinExistence type="evidence at protein level"/>
<accession>Q09688</accession>
<sequence>MKGFVVISRFILTLFILITPGLAGVVNYAENSEWNVPKYGNVLDSNCQGQKPVTFFGSVTEHVSNSWWIKLYDYMMTFISGEKLCMQNVAYEFEDISLCMDVVGSKCIPTLQSTDIEKVVNSTSAYLENSESDLTLGCFQIQRFQEESTLYIRALKSSEPVSCDTVRCIHFNHIPYV</sequence>
<gene>
    <name type="primary">mug121</name>
    <name type="ORF">SPAC13C5.06c</name>
</gene>
<reference key="1">
    <citation type="journal article" date="2002" name="Nature">
        <title>The genome sequence of Schizosaccharomyces pombe.</title>
        <authorList>
            <person name="Wood V."/>
            <person name="Gwilliam R."/>
            <person name="Rajandream M.A."/>
            <person name="Lyne M.H."/>
            <person name="Lyne R."/>
            <person name="Stewart A."/>
            <person name="Sgouros J.G."/>
            <person name="Peat N."/>
            <person name="Hayles J."/>
            <person name="Baker S.G."/>
            <person name="Basham D."/>
            <person name="Bowman S."/>
            <person name="Brooks K."/>
            <person name="Brown D."/>
            <person name="Brown S."/>
            <person name="Chillingworth T."/>
            <person name="Churcher C.M."/>
            <person name="Collins M."/>
            <person name="Connor R."/>
            <person name="Cronin A."/>
            <person name="Davis P."/>
            <person name="Feltwell T."/>
            <person name="Fraser A."/>
            <person name="Gentles S."/>
            <person name="Goble A."/>
            <person name="Hamlin N."/>
            <person name="Harris D.E."/>
            <person name="Hidalgo J."/>
            <person name="Hodgson G."/>
            <person name="Holroyd S."/>
            <person name="Hornsby T."/>
            <person name="Howarth S."/>
            <person name="Huckle E.J."/>
            <person name="Hunt S."/>
            <person name="Jagels K."/>
            <person name="James K.D."/>
            <person name="Jones L."/>
            <person name="Jones M."/>
            <person name="Leather S."/>
            <person name="McDonald S."/>
            <person name="McLean J."/>
            <person name="Mooney P."/>
            <person name="Moule S."/>
            <person name="Mungall K.L."/>
            <person name="Murphy L.D."/>
            <person name="Niblett D."/>
            <person name="Odell C."/>
            <person name="Oliver K."/>
            <person name="O'Neil S."/>
            <person name="Pearson D."/>
            <person name="Quail M.A."/>
            <person name="Rabbinowitsch E."/>
            <person name="Rutherford K.M."/>
            <person name="Rutter S."/>
            <person name="Saunders D."/>
            <person name="Seeger K."/>
            <person name="Sharp S."/>
            <person name="Skelton J."/>
            <person name="Simmonds M.N."/>
            <person name="Squares R."/>
            <person name="Squares S."/>
            <person name="Stevens K."/>
            <person name="Taylor K."/>
            <person name="Taylor R.G."/>
            <person name="Tivey A."/>
            <person name="Walsh S.V."/>
            <person name="Warren T."/>
            <person name="Whitehead S."/>
            <person name="Woodward J.R."/>
            <person name="Volckaert G."/>
            <person name="Aert R."/>
            <person name="Robben J."/>
            <person name="Grymonprez B."/>
            <person name="Weltjens I."/>
            <person name="Vanstreels E."/>
            <person name="Rieger M."/>
            <person name="Schaefer M."/>
            <person name="Mueller-Auer S."/>
            <person name="Gabel C."/>
            <person name="Fuchs M."/>
            <person name="Duesterhoeft A."/>
            <person name="Fritzc C."/>
            <person name="Holzer E."/>
            <person name="Moestl D."/>
            <person name="Hilbert H."/>
            <person name="Borzym K."/>
            <person name="Langer I."/>
            <person name="Beck A."/>
            <person name="Lehrach H."/>
            <person name="Reinhardt R."/>
            <person name="Pohl T.M."/>
            <person name="Eger P."/>
            <person name="Zimmermann W."/>
            <person name="Wedler H."/>
            <person name="Wambutt R."/>
            <person name="Purnelle B."/>
            <person name="Goffeau A."/>
            <person name="Cadieu E."/>
            <person name="Dreano S."/>
            <person name="Gloux S."/>
            <person name="Lelaure V."/>
            <person name="Mottier S."/>
            <person name="Galibert F."/>
            <person name="Aves S.J."/>
            <person name="Xiang Z."/>
            <person name="Hunt C."/>
            <person name="Moore K."/>
            <person name="Hurst S.M."/>
            <person name="Lucas M."/>
            <person name="Rochet M."/>
            <person name="Gaillardin C."/>
            <person name="Tallada V.A."/>
            <person name="Garzon A."/>
            <person name="Thode G."/>
            <person name="Daga R.R."/>
            <person name="Cruzado L."/>
            <person name="Jimenez J."/>
            <person name="Sanchez M."/>
            <person name="del Rey F."/>
            <person name="Benito J."/>
            <person name="Dominguez A."/>
            <person name="Revuelta J.L."/>
            <person name="Moreno S."/>
            <person name="Armstrong J."/>
            <person name="Forsburg S.L."/>
            <person name="Cerutti L."/>
            <person name="Lowe T."/>
            <person name="McCombie W.R."/>
            <person name="Paulsen I."/>
            <person name="Potashkin J."/>
            <person name="Shpakovski G.V."/>
            <person name="Ussery D."/>
            <person name="Barrell B.G."/>
            <person name="Nurse P."/>
        </authorList>
    </citation>
    <scope>NUCLEOTIDE SEQUENCE [LARGE SCALE GENOMIC DNA]</scope>
    <source>
        <strain>972 / ATCC 24843</strain>
    </source>
</reference>
<reference key="2">
    <citation type="journal article" date="2005" name="Curr. Biol.">
        <title>A large-scale screen in S. pombe identifies seven novel genes required for critical meiotic events.</title>
        <authorList>
            <person name="Martin-Castellanos C."/>
            <person name="Blanco M."/>
            <person name="Rozalen A.E."/>
            <person name="Perez-Hidalgo L."/>
            <person name="Garcia A.I."/>
            <person name="Conde F."/>
            <person name="Mata J."/>
            <person name="Ellermeier C."/>
            <person name="Davis L."/>
            <person name="San-Segundo P."/>
            <person name="Smith G.R."/>
            <person name="Moreno S."/>
        </authorList>
    </citation>
    <scope>FUNCTION IN MEIOSIS</scope>
</reference>
<reference key="3">
    <citation type="journal article" date="2006" name="Nat. Biotechnol.">
        <title>ORFeome cloning and global analysis of protein localization in the fission yeast Schizosaccharomyces pombe.</title>
        <authorList>
            <person name="Matsuyama A."/>
            <person name="Arai R."/>
            <person name="Yashiroda Y."/>
            <person name="Shirai A."/>
            <person name="Kamata A."/>
            <person name="Sekido S."/>
            <person name="Kobayashi Y."/>
            <person name="Hashimoto A."/>
            <person name="Hamamoto M."/>
            <person name="Hiraoka Y."/>
            <person name="Horinouchi S."/>
            <person name="Yoshida M."/>
        </authorList>
    </citation>
    <scope>SUBCELLULAR LOCATION [LARGE SCALE ANALYSIS]</scope>
</reference>
<evidence type="ECO:0000255" key="1"/>
<evidence type="ECO:0000269" key="2">
    <source>
    </source>
</evidence>
<evidence type="ECO:0000269" key="3">
    <source>
    </source>
</evidence>
<organism>
    <name type="scientific">Schizosaccharomyces pombe (strain 972 / ATCC 24843)</name>
    <name type="common">Fission yeast</name>
    <dbReference type="NCBI Taxonomy" id="284812"/>
    <lineage>
        <taxon>Eukaryota</taxon>
        <taxon>Fungi</taxon>
        <taxon>Dikarya</taxon>
        <taxon>Ascomycota</taxon>
        <taxon>Taphrinomycotina</taxon>
        <taxon>Schizosaccharomycetes</taxon>
        <taxon>Schizosaccharomycetales</taxon>
        <taxon>Schizosaccharomycetaceae</taxon>
        <taxon>Schizosaccharomyces</taxon>
    </lineage>
</organism>
<protein>
    <recommendedName>
        <fullName>Meiotically up-regulated gene 121 protein</fullName>
    </recommendedName>
</protein>
<keyword id="KW-0256">Endoplasmic reticulum</keyword>
<keyword id="KW-0325">Glycoprotein</keyword>
<keyword id="KW-0333">Golgi apparatus</keyword>
<keyword id="KW-1185">Reference proteome</keyword>
<keyword id="KW-0732">Signal</keyword>